<organism>
    <name type="scientific">Photobacterium profundum (strain SS9)</name>
    <dbReference type="NCBI Taxonomy" id="298386"/>
    <lineage>
        <taxon>Bacteria</taxon>
        <taxon>Pseudomonadati</taxon>
        <taxon>Pseudomonadota</taxon>
        <taxon>Gammaproteobacteria</taxon>
        <taxon>Vibrionales</taxon>
        <taxon>Vibrionaceae</taxon>
        <taxon>Photobacterium</taxon>
    </lineage>
</organism>
<gene>
    <name evidence="1" type="primary">smg</name>
    <name type="ordered locus">PBPRA3576</name>
</gene>
<comment type="similarity">
    <text evidence="1">Belongs to the Smg family.</text>
</comment>
<feature type="chain" id="PRO_0000209177" description="Protein Smg homolog">
    <location>
        <begin position="1"/>
        <end position="157"/>
    </location>
</feature>
<sequence>MMDILMYLFETYIQSDVELLVDQDELSDELSRAGFHQDDIYKALNWLEKLAALQETETIPYMNNSAITSIRVYIPQEMARMDVTCRGFLTYLEQIHVLSADTREMVIDRVMELETSDFVLDDLKWIILMVLFNAPGNENAYTQMEELLYGAEDGYIH</sequence>
<dbReference type="EMBL" id="CR378674">
    <property type="protein sequence ID" value="CAG21832.1"/>
    <property type="molecule type" value="Genomic_DNA"/>
</dbReference>
<dbReference type="RefSeq" id="WP_006233394.1">
    <property type="nucleotide sequence ID" value="NC_006370.1"/>
</dbReference>
<dbReference type="SMR" id="Q6LLJ6"/>
<dbReference type="STRING" id="298386.PBPRA3576"/>
<dbReference type="KEGG" id="ppr:PBPRA3576"/>
<dbReference type="eggNOG" id="COG2922">
    <property type="taxonomic scope" value="Bacteria"/>
</dbReference>
<dbReference type="HOGENOM" id="CLU_133242_0_0_6"/>
<dbReference type="Proteomes" id="UP000000593">
    <property type="component" value="Chromosome 1"/>
</dbReference>
<dbReference type="HAMAP" id="MF_00598">
    <property type="entry name" value="Smg"/>
    <property type="match status" value="1"/>
</dbReference>
<dbReference type="InterPro" id="IPR007456">
    <property type="entry name" value="Smg"/>
</dbReference>
<dbReference type="NCBIfam" id="NF002897">
    <property type="entry name" value="PRK03430.1"/>
    <property type="match status" value="1"/>
</dbReference>
<dbReference type="PANTHER" id="PTHR38692">
    <property type="entry name" value="PROTEIN SMG"/>
    <property type="match status" value="1"/>
</dbReference>
<dbReference type="PANTHER" id="PTHR38692:SF1">
    <property type="entry name" value="PROTEIN SMG"/>
    <property type="match status" value="1"/>
</dbReference>
<dbReference type="Pfam" id="PF04361">
    <property type="entry name" value="DUF494"/>
    <property type="match status" value="1"/>
</dbReference>
<name>SMG_PHOPR</name>
<evidence type="ECO:0000255" key="1">
    <source>
        <dbReference type="HAMAP-Rule" id="MF_00598"/>
    </source>
</evidence>
<accession>Q6LLJ6</accession>
<reference key="1">
    <citation type="journal article" date="2005" name="Science">
        <title>Life at depth: Photobacterium profundum genome sequence and expression analysis.</title>
        <authorList>
            <person name="Vezzi A."/>
            <person name="Campanaro S."/>
            <person name="D'Angelo M."/>
            <person name="Simonato F."/>
            <person name="Vitulo N."/>
            <person name="Lauro F.M."/>
            <person name="Cestaro A."/>
            <person name="Malacrida G."/>
            <person name="Simionati B."/>
            <person name="Cannata N."/>
            <person name="Romualdi C."/>
            <person name="Bartlett D.H."/>
            <person name="Valle G."/>
        </authorList>
    </citation>
    <scope>NUCLEOTIDE SEQUENCE [LARGE SCALE GENOMIC DNA]</scope>
    <source>
        <strain>ATCC BAA-1253 / SS9</strain>
    </source>
</reference>
<protein>
    <recommendedName>
        <fullName evidence="1">Protein Smg homolog</fullName>
    </recommendedName>
</protein>
<proteinExistence type="inferred from homology"/>
<keyword id="KW-1185">Reference proteome</keyword>